<evidence type="ECO:0000255" key="1">
    <source>
        <dbReference type="HAMAP-Rule" id="MF_00321"/>
    </source>
</evidence>
<sequence>MKVTKADIVISAVKPEQYPDSDLPEIALAGRSNVGKSSFINKILNRKKLVRISSKPGKTQTLNFFLINEMMHFVDVPGYGYAKVSKTERAAWGRMIETYFTTRTQLDAAVLVVDLRHQPTKDDIMMYDFLKHYEIPTIIIATKADKIPKGKWQKHLKVVKETLAVEIGDEIVLFSSETGLGKEEAWKAIHKMTKTKNA</sequence>
<dbReference type="EMBL" id="CP000903">
    <property type="protein sequence ID" value="ABY45473.1"/>
    <property type="molecule type" value="Genomic_DNA"/>
</dbReference>
<dbReference type="SMR" id="A9VIU3"/>
<dbReference type="KEGG" id="bwe:BcerKBAB4_4314"/>
<dbReference type="eggNOG" id="COG0218">
    <property type="taxonomic scope" value="Bacteria"/>
</dbReference>
<dbReference type="HOGENOM" id="CLU_033732_3_0_9"/>
<dbReference type="Proteomes" id="UP000002154">
    <property type="component" value="Chromosome"/>
</dbReference>
<dbReference type="GO" id="GO:0005829">
    <property type="term" value="C:cytosol"/>
    <property type="evidence" value="ECO:0007669"/>
    <property type="project" value="TreeGrafter"/>
</dbReference>
<dbReference type="GO" id="GO:0005525">
    <property type="term" value="F:GTP binding"/>
    <property type="evidence" value="ECO:0007669"/>
    <property type="project" value="UniProtKB-UniRule"/>
</dbReference>
<dbReference type="GO" id="GO:0046872">
    <property type="term" value="F:metal ion binding"/>
    <property type="evidence" value="ECO:0007669"/>
    <property type="project" value="UniProtKB-KW"/>
</dbReference>
<dbReference type="GO" id="GO:0000917">
    <property type="term" value="P:division septum assembly"/>
    <property type="evidence" value="ECO:0007669"/>
    <property type="project" value="UniProtKB-KW"/>
</dbReference>
<dbReference type="CDD" id="cd01876">
    <property type="entry name" value="YihA_EngB"/>
    <property type="match status" value="1"/>
</dbReference>
<dbReference type="FunFam" id="3.40.50.300:FF:000098">
    <property type="entry name" value="Probable GTP-binding protein EngB"/>
    <property type="match status" value="1"/>
</dbReference>
<dbReference type="Gene3D" id="3.40.50.300">
    <property type="entry name" value="P-loop containing nucleotide triphosphate hydrolases"/>
    <property type="match status" value="1"/>
</dbReference>
<dbReference type="HAMAP" id="MF_00321">
    <property type="entry name" value="GTPase_EngB"/>
    <property type="match status" value="1"/>
</dbReference>
<dbReference type="InterPro" id="IPR030393">
    <property type="entry name" value="G_ENGB_dom"/>
</dbReference>
<dbReference type="InterPro" id="IPR006073">
    <property type="entry name" value="GTP-bd"/>
</dbReference>
<dbReference type="InterPro" id="IPR019987">
    <property type="entry name" value="GTP-bd_ribosome_bio_YsxC"/>
</dbReference>
<dbReference type="InterPro" id="IPR027417">
    <property type="entry name" value="P-loop_NTPase"/>
</dbReference>
<dbReference type="NCBIfam" id="TIGR03598">
    <property type="entry name" value="GTPase_YsxC"/>
    <property type="match status" value="1"/>
</dbReference>
<dbReference type="PANTHER" id="PTHR11649:SF13">
    <property type="entry name" value="ENGB-TYPE G DOMAIN-CONTAINING PROTEIN"/>
    <property type="match status" value="1"/>
</dbReference>
<dbReference type="PANTHER" id="PTHR11649">
    <property type="entry name" value="MSS1/TRME-RELATED GTP-BINDING PROTEIN"/>
    <property type="match status" value="1"/>
</dbReference>
<dbReference type="Pfam" id="PF01926">
    <property type="entry name" value="MMR_HSR1"/>
    <property type="match status" value="1"/>
</dbReference>
<dbReference type="SUPFAM" id="SSF52540">
    <property type="entry name" value="P-loop containing nucleoside triphosphate hydrolases"/>
    <property type="match status" value="1"/>
</dbReference>
<dbReference type="PROSITE" id="PS51706">
    <property type="entry name" value="G_ENGB"/>
    <property type="match status" value="1"/>
</dbReference>
<reference key="1">
    <citation type="journal article" date="2008" name="Chem. Biol. Interact.">
        <title>Extending the Bacillus cereus group genomics to putative food-borne pathogens of different toxicity.</title>
        <authorList>
            <person name="Lapidus A."/>
            <person name="Goltsman E."/>
            <person name="Auger S."/>
            <person name="Galleron N."/>
            <person name="Segurens B."/>
            <person name="Dossat C."/>
            <person name="Land M.L."/>
            <person name="Broussolle V."/>
            <person name="Brillard J."/>
            <person name="Guinebretiere M.-H."/>
            <person name="Sanchis V."/>
            <person name="Nguen-the C."/>
            <person name="Lereclus D."/>
            <person name="Richardson P."/>
            <person name="Wincker P."/>
            <person name="Weissenbach J."/>
            <person name="Ehrlich S.D."/>
            <person name="Sorokin A."/>
        </authorList>
    </citation>
    <scope>NUCLEOTIDE SEQUENCE [LARGE SCALE GENOMIC DNA]</scope>
    <source>
        <strain>KBAB4</strain>
    </source>
</reference>
<feature type="chain" id="PRO_1000115953" description="Probable GTP-binding protein EngB">
    <location>
        <begin position="1"/>
        <end position="198"/>
    </location>
</feature>
<feature type="domain" description="EngB-type G" evidence="1">
    <location>
        <begin position="22"/>
        <end position="195"/>
    </location>
</feature>
<feature type="binding site" evidence="1">
    <location>
        <begin position="30"/>
        <end position="37"/>
    </location>
    <ligand>
        <name>GTP</name>
        <dbReference type="ChEBI" id="CHEBI:37565"/>
    </ligand>
</feature>
<feature type="binding site" evidence="1">
    <location>
        <position position="37"/>
    </location>
    <ligand>
        <name>Mg(2+)</name>
        <dbReference type="ChEBI" id="CHEBI:18420"/>
    </ligand>
</feature>
<feature type="binding site" evidence="1">
    <location>
        <begin position="57"/>
        <end position="61"/>
    </location>
    <ligand>
        <name>GTP</name>
        <dbReference type="ChEBI" id="CHEBI:37565"/>
    </ligand>
</feature>
<feature type="binding site" evidence="1">
    <location>
        <position position="59"/>
    </location>
    <ligand>
        <name>Mg(2+)</name>
        <dbReference type="ChEBI" id="CHEBI:18420"/>
    </ligand>
</feature>
<feature type="binding site" evidence="1">
    <location>
        <begin position="75"/>
        <end position="78"/>
    </location>
    <ligand>
        <name>GTP</name>
        <dbReference type="ChEBI" id="CHEBI:37565"/>
    </ligand>
</feature>
<feature type="binding site" evidence="1">
    <location>
        <begin position="142"/>
        <end position="145"/>
    </location>
    <ligand>
        <name>GTP</name>
        <dbReference type="ChEBI" id="CHEBI:37565"/>
    </ligand>
</feature>
<feature type="binding site" evidence="1">
    <location>
        <begin position="174"/>
        <end position="176"/>
    </location>
    <ligand>
        <name>GTP</name>
        <dbReference type="ChEBI" id="CHEBI:37565"/>
    </ligand>
</feature>
<keyword id="KW-0131">Cell cycle</keyword>
<keyword id="KW-0132">Cell division</keyword>
<keyword id="KW-0342">GTP-binding</keyword>
<keyword id="KW-0460">Magnesium</keyword>
<keyword id="KW-0479">Metal-binding</keyword>
<keyword id="KW-0547">Nucleotide-binding</keyword>
<keyword id="KW-0717">Septation</keyword>
<name>ENGB_BACMK</name>
<comment type="function">
    <text evidence="1">Necessary for normal cell division and for the maintenance of normal septation.</text>
</comment>
<comment type="cofactor">
    <cofactor evidence="1">
        <name>Mg(2+)</name>
        <dbReference type="ChEBI" id="CHEBI:18420"/>
    </cofactor>
</comment>
<comment type="similarity">
    <text evidence="1">Belongs to the TRAFAC class TrmE-Era-EngA-EngB-Septin-like GTPase superfamily. EngB GTPase family.</text>
</comment>
<gene>
    <name evidence="1" type="primary">engB</name>
    <name type="ordered locus">BcerKBAB4_4314</name>
</gene>
<protein>
    <recommendedName>
        <fullName evidence="1">Probable GTP-binding protein EngB</fullName>
    </recommendedName>
</protein>
<accession>A9VIU3</accession>
<organism>
    <name type="scientific">Bacillus mycoides (strain KBAB4)</name>
    <name type="common">Bacillus weihenstephanensis</name>
    <dbReference type="NCBI Taxonomy" id="315730"/>
    <lineage>
        <taxon>Bacteria</taxon>
        <taxon>Bacillati</taxon>
        <taxon>Bacillota</taxon>
        <taxon>Bacilli</taxon>
        <taxon>Bacillales</taxon>
        <taxon>Bacillaceae</taxon>
        <taxon>Bacillus</taxon>
        <taxon>Bacillus cereus group</taxon>
    </lineage>
</organism>
<proteinExistence type="inferred from homology"/>